<name>CRBA2_HUMAN</name>
<protein>
    <recommendedName>
        <fullName>Beta-crystallin A2</fullName>
    </recommendedName>
    <alternativeName>
        <fullName>Beta-A2 crystallin</fullName>
    </alternativeName>
</protein>
<keyword id="KW-0898">Cataract</keyword>
<keyword id="KW-0225">Disease variant</keyword>
<keyword id="KW-0273">Eye lens protein</keyword>
<keyword id="KW-1267">Proteomics identification</keyword>
<keyword id="KW-1185">Reference proteome</keyword>
<keyword id="KW-0677">Repeat</keyword>
<accession>P53672</accession>
<accession>Q4ZFX0</accession>
<accession>Q9Y562</accession>
<gene>
    <name type="primary">CRYBA2</name>
</gene>
<organism>
    <name type="scientific">Homo sapiens</name>
    <name type="common">Human</name>
    <dbReference type="NCBI Taxonomy" id="9606"/>
    <lineage>
        <taxon>Eukaryota</taxon>
        <taxon>Metazoa</taxon>
        <taxon>Chordata</taxon>
        <taxon>Craniata</taxon>
        <taxon>Vertebrata</taxon>
        <taxon>Euteleostomi</taxon>
        <taxon>Mammalia</taxon>
        <taxon>Eutheria</taxon>
        <taxon>Euarchontoglires</taxon>
        <taxon>Primates</taxon>
        <taxon>Haplorrhini</taxon>
        <taxon>Catarrhini</taxon>
        <taxon>Hominidae</taxon>
        <taxon>Homo</taxon>
    </lineage>
</organism>
<comment type="function">
    <text>Crystallins are the dominant structural components of the vertebrate eye lens.</text>
</comment>
<comment type="subunit">
    <text evidence="1">Homo/heterodimer, or complexes of higher-order. The structure of beta-crystallin oligomers seems to be stabilized through interactions between the N-terminal arms (By similarity).</text>
</comment>
<comment type="interaction">
    <interactant intactId="EBI-750444">
        <id>P53672</id>
    </interactant>
    <interactant intactId="EBI-12224467">
        <id>Q9NYG5-2</id>
        <label>ANAPC11</label>
    </interactant>
    <organismsDiffer>false</organismsDiffer>
    <experiments>3</experiments>
</comment>
<comment type="interaction">
    <interactant intactId="EBI-750444">
        <id>P53672</id>
    </interactant>
    <interactant intactId="EBI-948603">
        <id>Q03989</id>
        <label>ARID5A</label>
    </interactant>
    <organismsDiffer>false</organismsDiffer>
    <experiments>3</experiments>
</comment>
<comment type="interaction">
    <interactant intactId="EBI-750444">
        <id>P53672</id>
    </interactant>
    <interactant intactId="EBI-930964">
        <id>P54253</id>
        <label>ATXN1</label>
    </interactant>
    <organismsDiffer>false</organismsDiffer>
    <experiments>7</experiments>
</comment>
<comment type="interaction">
    <interactant intactId="EBI-750444">
        <id>P53672</id>
    </interactant>
    <interactant intactId="EBI-10988864">
        <id>P46379-2</id>
        <label>BAG6</label>
    </interactant>
    <organismsDiffer>false</organismsDiffer>
    <experiments>3</experiments>
</comment>
<comment type="interaction">
    <interactant intactId="EBI-750444">
        <id>P53672</id>
    </interactant>
    <interactant intactId="EBI-953896">
        <id>Q9NP55</id>
        <label>BPIFA1</label>
    </interactant>
    <organismsDiffer>false</organismsDiffer>
    <experiments>3</experiments>
</comment>
<comment type="interaction">
    <interactant intactId="EBI-750444">
        <id>P53672</id>
    </interactant>
    <interactant intactId="EBI-12809220">
        <id>Q5SWW7</id>
        <label>C10orf55</label>
    </interactant>
    <organismsDiffer>false</organismsDiffer>
    <experiments>3</experiments>
</comment>
<comment type="interaction">
    <interactant intactId="EBI-750444">
        <id>P53672</id>
    </interactant>
    <interactant intactId="EBI-7317823">
        <id>Q6P5X5</id>
        <label>C22orf39</label>
    </interactant>
    <organismsDiffer>false</organismsDiffer>
    <experiments>3</experiments>
</comment>
<comment type="interaction">
    <interactant intactId="EBI-750444">
        <id>P53672</id>
    </interactant>
    <interactant intactId="EBI-751587">
        <id>Q9GZU7</id>
        <label>CTDSP1</label>
    </interactant>
    <organismsDiffer>false</organismsDiffer>
    <experiments>3</experiments>
</comment>
<comment type="interaction">
    <interactant intactId="EBI-750444">
        <id>P53672</id>
    </interactant>
    <interactant intactId="EBI-3867333">
        <id>A8MQ03</id>
        <label>CYSRT1</label>
    </interactant>
    <organismsDiffer>false</organismsDiffer>
    <experiments>3</experiments>
</comment>
<comment type="interaction">
    <interactant intactId="EBI-750444">
        <id>P53672</id>
    </interactant>
    <interactant intactId="EBI-12593112">
        <id>O75190-2</id>
        <label>DNAJB6</label>
    </interactant>
    <organismsDiffer>false</organismsDiffer>
    <experiments>3</experiments>
</comment>
<comment type="interaction">
    <interactant intactId="EBI-750444">
        <id>P53672</id>
    </interactant>
    <interactant intactId="EBI-741101">
        <id>Q13643</id>
        <label>FHL3</label>
    </interactant>
    <organismsDiffer>false</organismsDiffer>
    <experiments>3</experiments>
</comment>
<comment type="interaction">
    <interactant intactId="EBI-750444">
        <id>P53672</id>
    </interactant>
    <interactant intactId="EBI-750641">
        <id>Q5TD97</id>
        <label>FHL5</label>
    </interactant>
    <organismsDiffer>false</organismsDiffer>
    <experiments>3</experiments>
</comment>
<comment type="interaction">
    <interactant intactId="EBI-750444">
        <id>P53672</id>
    </interactant>
    <interactant intactId="EBI-9641086">
        <id>P21333-2</id>
        <label>FLNA</label>
    </interactant>
    <organismsDiffer>false</organismsDiffer>
    <experiments>3</experiments>
</comment>
<comment type="interaction">
    <interactant intactId="EBI-750444">
        <id>P53672</id>
    </interactant>
    <interactant intactId="EBI-466029">
        <id>P42858</id>
        <label>HTT</label>
    </interactant>
    <organismsDiffer>false</organismsDiffer>
    <experiments>3</experiments>
</comment>
<comment type="interaction">
    <interactant intactId="EBI-750444">
        <id>P53672</id>
    </interactant>
    <interactant intactId="EBI-948266">
        <id>O14901</id>
        <label>KLF11</label>
    </interactant>
    <organismsDiffer>false</organismsDiffer>
    <experiments>3</experiments>
</comment>
<comment type="interaction">
    <interactant intactId="EBI-750444">
        <id>P53672</id>
    </interactant>
    <interactant intactId="EBI-1052037">
        <id>Q8IUC1</id>
        <label>KRTAP11-1</label>
    </interactant>
    <organismsDiffer>false</organismsDiffer>
    <experiments>3</experiments>
</comment>
<comment type="interaction">
    <interactant intactId="EBI-750444">
        <id>P53672</id>
    </interactant>
    <interactant intactId="EBI-10241252">
        <id>Q3SY46</id>
        <label>KRTAP13-3</label>
    </interactant>
    <organismsDiffer>false</organismsDiffer>
    <experiments>3</experiments>
</comment>
<comment type="interaction">
    <interactant intactId="EBI-750444">
        <id>P53672</id>
    </interactant>
    <interactant intactId="EBI-18394498">
        <id>Q8IUC3</id>
        <label>KRTAP7-1</label>
    </interactant>
    <organismsDiffer>false</organismsDiffer>
    <experiments>3</experiments>
</comment>
<comment type="interaction">
    <interactant intactId="EBI-750444">
        <id>P53672</id>
    </interactant>
    <interactant intactId="EBI-9088686">
        <id>Q14847-2</id>
        <label>LASP1</label>
    </interactant>
    <organismsDiffer>false</organismsDiffer>
    <experiments>4</experiments>
</comment>
<comment type="interaction">
    <interactant intactId="EBI-750444">
        <id>P53672</id>
    </interactant>
    <interactant intactId="EBI-10271199">
        <id>Q8NI38</id>
        <label>NFKBID</label>
    </interactant>
    <organismsDiffer>false</organismsDiffer>
    <experiments>3</experiments>
</comment>
<comment type="interaction">
    <interactant intactId="EBI-750444">
        <id>P53672</id>
    </interactant>
    <interactant intactId="EBI-12813389">
        <id>Q8TDS5</id>
        <label>OXER1</label>
    </interactant>
    <organismsDiffer>false</organismsDiffer>
    <experiments>3</experiments>
</comment>
<comment type="interaction">
    <interactant intactId="EBI-750444">
        <id>P53672</id>
    </interactant>
    <interactant intactId="EBI-79893">
        <id>Q92569</id>
        <label>PIK3R3</label>
    </interactant>
    <organismsDiffer>false</organismsDiffer>
    <experiments>4</experiments>
</comment>
<comment type="interaction">
    <interactant intactId="EBI-750444">
        <id>P53672</id>
    </interactant>
    <interactant intactId="EBI-6257312">
        <id>Q9BVN2</id>
        <label>RUSC1</label>
    </interactant>
    <organismsDiffer>false</organismsDiffer>
    <experiments>3</experiments>
</comment>
<comment type="interaction">
    <interactant intactId="EBI-750444">
        <id>P53672</id>
    </interactant>
    <interactant intactId="EBI-990792">
        <id>P00441</id>
        <label>SOD1</label>
    </interactant>
    <organismsDiffer>false</organismsDiffer>
    <experiments>3</experiments>
</comment>
<comment type="interaction">
    <interactant intactId="EBI-750444">
        <id>P53672</id>
    </interactant>
    <interactant intactId="EBI-355744">
        <id>Q12933</id>
        <label>TRAF2</label>
    </interactant>
    <organismsDiffer>false</organismsDiffer>
    <experiments>3</experiments>
</comment>
<comment type="interaction">
    <interactant intactId="EBI-750444">
        <id>P53672</id>
    </interactant>
    <interactant intactId="EBI-358993">
        <id>Q15645</id>
        <label>TRIP13</label>
    </interactant>
    <organismsDiffer>false</organismsDiffer>
    <experiments>5</experiments>
</comment>
<comment type="interaction">
    <interactant intactId="EBI-750444">
        <id>P53672</id>
    </interactant>
    <interactant intactId="EBI-12817837">
        <id>Q9H9P5-5</id>
        <label>UNKL</label>
    </interactant>
    <organismsDiffer>false</organismsDiffer>
    <experiments>3</experiments>
</comment>
<comment type="interaction">
    <interactant intactId="EBI-750444">
        <id>P53672</id>
    </interactant>
    <interactant intactId="EBI-2107455">
        <id>Q08AM6</id>
        <label>VAC14</label>
    </interactant>
    <organismsDiffer>false</organismsDiffer>
    <experiments>3</experiments>
</comment>
<comment type="domain">
    <text>Has a two-domain beta-structure, folded into four very similar Greek key motifs.</text>
</comment>
<comment type="disease" evidence="3">
    <disease id="DI-04171">
        <name>Cataract 42</name>
        <acronym>CTRCT42</acronym>
        <description>An opacification of the crystalline lens of the eye that frequently results in visual impairment or blindness. Opacities vary in morphology, are often confined to a portion of the lens, and may be static or progressive. In general, the more posteriorly located and dense an opacity, the greater the impact on visual function.</description>
        <dbReference type="MIM" id="115900"/>
    </disease>
    <text>The disease is caused by variants affecting the gene represented in this entry.</text>
</comment>
<comment type="similarity">
    <text evidence="5">Belongs to the beta/gamma-crystallin family.</text>
</comment>
<sequence>MSSAPAPGPAPASLTLWDEEDFQGRRCRLLSDCANVCERGGLPRVRSVKVENGVWVAFEYPDFQGQQFILEKGDYPRWSAWSGSSSHNSNQLLSFRPVLCANHNDSRVTLFEGDNFQGCKFDLVDDYPSLPSMGWASKDVGSLKVSSGAWVAYQYPGYRGYQYVLERDRHSGEFCTYGELGTQAHTGQLQSIRRVQH</sequence>
<proteinExistence type="evidence at protein level"/>
<evidence type="ECO:0000250" key="1"/>
<evidence type="ECO:0000255" key="2">
    <source>
        <dbReference type="PROSITE-ProRule" id="PRU00028"/>
    </source>
</evidence>
<evidence type="ECO:0000269" key="3">
    <source>
    </source>
</evidence>
<evidence type="ECO:0000269" key="4">
    <source>
    </source>
</evidence>
<evidence type="ECO:0000305" key="5"/>
<reference key="1">
    <citation type="submission" date="1999-07" db="EMBL/GenBank/DDBJ databases">
        <authorList>
            <person name="Wistow G."/>
        </authorList>
    </citation>
    <scope>NUCLEOTIDE SEQUENCE [MRNA]</scope>
</reference>
<reference key="2">
    <citation type="submission" date="2003-05" db="EMBL/GenBank/DDBJ databases">
        <title>Cloning of human full-length CDSs in BD Creator(TM) system donor vector.</title>
        <authorList>
            <person name="Kalnine N."/>
            <person name="Chen X."/>
            <person name="Rolfs A."/>
            <person name="Halleck A."/>
            <person name="Hines L."/>
            <person name="Eisenstein S."/>
            <person name="Koundinya M."/>
            <person name="Raphael J."/>
            <person name="Moreira D."/>
            <person name="Kelley T."/>
            <person name="LaBaer J."/>
            <person name="Lin Y."/>
            <person name="Phelan M."/>
            <person name="Farmer A."/>
        </authorList>
    </citation>
    <scope>NUCLEOTIDE SEQUENCE [LARGE SCALE MRNA]</scope>
</reference>
<reference key="3">
    <citation type="journal article" date="2005" name="Nature">
        <title>Generation and annotation of the DNA sequences of human chromosomes 2 and 4.</title>
        <authorList>
            <person name="Hillier L.W."/>
            <person name="Graves T.A."/>
            <person name="Fulton R.S."/>
            <person name="Fulton L.A."/>
            <person name="Pepin K.H."/>
            <person name="Minx P."/>
            <person name="Wagner-McPherson C."/>
            <person name="Layman D."/>
            <person name="Wylie K."/>
            <person name="Sekhon M."/>
            <person name="Becker M.C."/>
            <person name="Fewell G.A."/>
            <person name="Delehaunty K.D."/>
            <person name="Miner T.L."/>
            <person name="Nash W.E."/>
            <person name="Kremitzki C."/>
            <person name="Oddy L."/>
            <person name="Du H."/>
            <person name="Sun H."/>
            <person name="Bradshaw-Cordum H."/>
            <person name="Ali J."/>
            <person name="Carter J."/>
            <person name="Cordes M."/>
            <person name="Harris A."/>
            <person name="Isak A."/>
            <person name="van Brunt A."/>
            <person name="Nguyen C."/>
            <person name="Du F."/>
            <person name="Courtney L."/>
            <person name="Kalicki J."/>
            <person name="Ozersky P."/>
            <person name="Abbott S."/>
            <person name="Armstrong J."/>
            <person name="Belter E.A."/>
            <person name="Caruso L."/>
            <person name="Cedroni M."/>
            <person name="Cotton M."/>
            <person name="Davidson T."/>
            <person name="Desai A."/>
            <person name="Elliott G."/>
            <person name="Erb T."/>
            <person name="Fronick C."/>
            <person name="Gaige T."/>
            <person name="Haakenson W."/>
            <person name="Haglund K."/>
            <person name="Holmes A."/>
            <person name="Harkins R."/>
            <person name="Kim K."/>
            <person name="Kruchowski S.S."/>
            <person name="Strong C.M."/>
            <person name="Grewal N."/>
            <person name="Goyea E."/>
            <person name="Hou S."/>
            <person name="Levy A."/>
            <person name="Martinka S."/>
            <person name="Mead K."/>
            <person name="McLellan M.D."/>
            <person name="Meyer R."/>
            <person name="Randall-Maher J."/>
            <person name="Tomlinson C."/>
            <person name="Dauphin-Kohlberg S."/>
            <person name="Kozlowicz-Reilly A."/>
            <person name="Shah N."/>
            <person name="Swearengen-Shahid S."/>
            <person name="Snider J."/>
            <person name="Strong J.T."/>
            <person name="Thompson J."/>
            <person name="Yoakum M."/>
            <person name="Leonard S."/>
            <person name="Pearman C."/>
            <person name="Trani L."/>
            <person name="Radionenko M."/>
            <person name="Waligorski J.E."/>
            <person name="Wang C."/>
            <person name="Rock S.M."/>
            <person name="Tin-Wollam A.-M."/>
            <person name="Maupin R."/>
            <person name="Latreille P."/>
            <person name="Wendl M.C."/>
            <person name="Yang S.-P."/>
            <person name="Pohl C."/>
            <person name="Wallis J.W."/>
            <person name="Spieth J."/>
            <person name="Bieri T.A."/>
            <person name="Berkowicz N."/>
            <person name="Nelson J.O."/>
            <person name="Osborne J."/>
            <person name="Ding L."/>
            <person name="Meyer R."/>
            <person name="Sabo A."/>
            <person name="Shotland Y."/>
            <person name="Sinha P."/>
            <person name="Wohldmann P.E."/>
            <person name="Cook L.L."/>
            <person name="Hickenbotham M.T."/>
            <person name="Eldred J."/>
            <person name="Williams D."/>
            <person name="Jones T.A."/>
            <person name="She X."/>
            <person name="Ciccarelli F.D."/>
            <person name="Izaurralde E."/>
            <person name="Taylor J."/>
            <person name="Schmutz J."/>
            <person name="Myers R.M."/>
            <person name="Cox D.R."/>
            <person name="Huang X."/>
            <person name="McPherson J.D."/>
            <person name="Mardis E.R."/>
            <person name="Clifton S.W."/>
            <person name="Warren W.C."/>
            <person name="Chinwalla A.T."/>
            <person name="Eddy S.R."/>
            <person name="Marra M.A."/>
            <person name="Ovcharenko I."/>
            <person name="Furey T.S."/>
            <person name="Miller W."/>
            <person name="Eichler E.E."/>
            <person name="Bork P."/>
            <person name="Suyama M."/>
            <person name="Torrents D."/>
            <person name="Waterston R.H."/>
            <person name="Wilson R.K."/>
        </authorList>
    </citation>
    <scope>NUCLEOTIDE SEQUENCE [LARGE SCALE GENOMIC DNA]</scope>
</reference>
<reference key="4">
    <citation type="submission" date="2005-07" db="EMBL/GenBank/DDBJ databases">
        <authorList>
            <person name="Mural R.J."/>
            <person name="Istrail S."/>
            <person name="Sutton G."/>
            <person name="Florea L."/>
            <person name="Halpern A.L."/>
            <person name="Mobarry C.M."/>
            <person name="Lippert R."/>
            <person name="Walenz B."/>
            <person name="Shatkay H."/>
            <person name="Dew I."/>
            <person name="Miller J.R."/>
            <person name="Flanigan M.J."/>
            <person name="Edwards N.J."/>
            <person name="Bolanos R."/>
            <person name="Fasulo D."/>
            <person name="Halldorsson B.V."/>
            <person name="Hannenhalli S."/>
            <person name="Turner R."/>
            <person name="Yooseph S."/>
            <person name="Lu F."/>
            <person name="Nusskern D.R."/>
            <person name="Shue B.C."/>
            <person name="Zheng X.H."/>
            <person name="Zhong F."/>
            <person name="Delcher A.L."/>
            <person name="Huson D.H."/>
            <person name="Kravitz S.A."/>
            <person name="Mouchard L."/>
            <person name="Reinert K."/>
            <person name="Remington K.A."/>
            <person name="Clark A.G."/>
            <person name="Waterman M.S."/>
            <person name="Eichler E.E."/>
            <person name="Adams M.D."/>
            <person name="Hunkapiller M.W."/>
            <person name="Myers E.W."/>
            <person name="Venter J.C."/>
        </authorList>
    </citation>
    <scope>NUCLEOTIDE SEQUENCE [LARGE SCALE GENOMIC DNA]</scope>
</reference>
<reference key="5">
    <citation type="journal article" date="2004" name="Genome Res.">
        <title>The status, quality, and expansion of the NIH full-length cDNA project: the Mammalian Gene Collection (MGC).</title>
        <authorList>
            <consortium name="The MGC Project Team"/>
        </authorList>
    </citation>
    <scope>NUCLEOTIDE SEQUENCE [LARGE SCALE MRNA]</scope>
    <source>
        <tissue>Placenta</tissue>
    </source>
</reference>
<reference key="6">
    <citation type="journal article" date="1995" name="Genomics">
        <title>Identification of the human beta A2 crystallin gene (CRYBA2): localization of the gene on human chromosome 2 and of the homologous gene on mouse chromosome 1.</title>
        <authorList>
            <person name="Hulsebos T.J.M."/>
            <person name="Cerosaletti K.M."/>
            <person name="Fournier R.E.K."/>
            <person name="Sinke R.J."/>
            <person name="Rocchi M."/>
            <person name="Marzella R."/>
            <person name="Jenkins N.A."/>
            <person name="Gilbert N.C."/>
            <person name="Copeland N.G."/>
        </authorList>
    </citation>
    <scope>NUCLEOTIDE SEQUENCE [GENOMIC DNA] OF 109-142 AND 158-185</scope>
</reference>
<reference key="7">
    <citation type="journal article" date="2013" name="Hum. Genet.">
        <title>Whole exome sequencing in dominant cataract identifies a new causative factor, CRYBA2, and a variety of novel alleles in known genes.</title>
        <authorList>
            <person name="Reis L.M."/>
            <person name="Tyler R.C."/>
            <person name="Muheisen S."/>
            <person name="Raggio V."/>
            <person name="Salviati L."/>
            <person name="Han D.P."/>
            <person name="Costakos D."/>
            <person name="Yonath H."/>
            <person name="Hall S."/>
            <person name="Power P."/>
            <person name="Semina E.V."/>
        </authorList>
    </citation>
    <scope>INVOLVEMENT IN CTRCT42</scope>
    <scope>VARIANT CTRCT42 MET-50</scope>
</reference>
<reference key="8">
    <citation type="journal article" date="2013" name="Am. J. Hum. Genet.">
        <title>Mutations in GMPPA cause a glycosylation disorder characterized by intellectual disability and autonomic dysfunction.</title>
        <authorList>
            <person name="Koehler K."/>
            <person name="Malik M."/>
            <person name="Mahmood S."/>
            <person name="Giesselmann S."/>
            <person name="Beetz C."/>
            <person name="Hennings J.C."/>
            <person name="Huebner A.K."/>
            <person name="Grahn A."/>
            <person name="Reunert J."/>
            <person name="Nurnberg G."/>
            <person name="Thiele H."/>
            <person name="Altmuller J."/>
            <person name="Nurnberg P."/>
            <person name="Mumtaz R."/>
            <person name="Babovic-Vuksanovic D."/>
            <person name="Basel-Vanagaite L."/>
            <person name="Borck G."/>
            <person name="Bramswig J."/>
            <person name="Muhlenberg R."/>
            <person name="Sarda P."/>
            <person name="Sikiric A."/>
            <person name="Anyane-Yeboa K."/>
            <person name="Zeharia A."/>
            <person name="Ahmad A."/>
            <person name="Coubes C."/>
            <person name="Wada Y."/>
            <person name="Marquardt T."/>
            <person name="Vanderschaeghe D."/>
            <person name="Van Schaftingen E."/>
            <person name="Kurth I."/>
            <person name="Huebner A."/>
            <person name="Hubner C.A."/>
        </authorList>
    </citation>
    <scope>VARIANT SER-7</scope>
</reference>
<dbReference type="EMBL" id="AF166331">
    <property type="protein sequence ID" value="AAD45388.1"/>
    <property type="molecule type" value="mRNA"/>
</dbReference>
<dbReference type="EMBL" id="BT007447">
    <property type="protein sequence ID" value="AAP36115.1"/>
    <property type="molecule type" value="mRNA"/>
</dbReference>
<dbReference type="EMBL" id="AC097468">
    <property type="protein sequence ID" value="AAX88918.1"/>
    <property type="molecule type" value="Genomic_DNA"/>
</dbReference>
<dbReference type="EMBL" id="CH471063">
    <property type="protein sequence ID" value="EAW70665.1"/>
    <property type="molecule type" value="Genomic_DNA"/>
</dbReference>
<dbReference type="EMBL" id="BC006285">
    <property type="protein sequence ID" value="AAH06285.1"/>
    <property type="molecule type" value="mRNA"/>
</dbReference>
<dbReference type="EMBL" id="X86395">
    <property type="protein sequence ID" value="CAA60147.1"/>
    <property type="molecule type" value="Genomic_DNA"/>
</dbReference>
<dbReference type="EMBL" id="X86396">
    <property type="protein sequence ID" value="CAA60148.1"/>
    <property type="molecule type" value="Genomic_DNA"/>
</dbReference>
<dbReference type="CCDS" id="CCDS2429.1"/>
<dbReference type="PIR" id="S55440">
    <property type="entry name" value="S55440"/>
</dbReference>
<dbReference type="PIR" id="S55442">
    <property type="entry name" value="S55442"/>
</dbReference>
<dbReference type="RefSeq" id="NP_476434.1">
    <property type="nucleotide sequence ID" value="NM_057093.2"/>
</dbReference>
<dbReference type="RefSeq" id="NP_476435.1">
    <property type="nucleotide sequence ID" value="NM_057094.2"/>
</dbReference>
<dbReference type="SMR" id="P53672"/>
<dbReference type="BioGRID" id="107802">
    <property type="interactions" value="25"/>
</dbReference>
<dbReference type="FunCoup" id="P53672">
    <property type="interactions" value="7"/>
</dbReference>
<dbReference type="IntAct" id="P53672">
    <property type="interactions" value="32"/>
</dbReference>
<dbReference type="MINT" id="P53672"/>
<dbReference type="STRING" id="9606.ENSP00000295728"/>
<dbReference type="iPTMnet" id="P53672"/>
<dbReference type="PhosphoSitePlus" id="P53672"/>
<dbReference type="BioMuta" id="CRYBA2"/>
<dbReference type="DMDM" id="12644311"/>
<dbReference type="MassIVE" id="P53672"/>
<dbReference type="PaxDb" id="9606-ENSP00000295728"/>
<dbReference type="PeptideAtlas" id="P53672"/>
<dbReference type="ProteomicsDB" id="56605"/>
<dbReference type="Antibodypedia" id="34295">
    <property type="antibodies" value="50 antibodies from 14 providers"/>
</dbReference>
<dbReference type="DNASU" id="1412"/>
<dbReference type="Ensembl" id="ENST00000295728.7">
    <property type="protein sequence ID" value="ENSP00000295728.2"/>
    <property type="gene ID" value="ENSG00000163499.12"/>
</dbReference>
<dbReference type="Ensembl" id="ENST00000392096.6">
    <property type="protein sequence ID" value="ENSP00000375946.2"/>
    <property type="gene ID" value="ENSG00000163499.12"/>
</dbReference>
<dbReference type="GeneID" id="1412"/>
<dbReference type="KEGG" id="hsa:1412"/>
<dbReference type="MANE-Select" id="ENST00000295728.7">
    <property type="protein sequence ID" value="ENSP00000295728.2"/>
    <property type="RefSeq nucleotide sequence ID" value="NM_057093.2"/>
    <property type="RefSeq protein sequence ID" value="NP_476434.1"/>
</dbReference>
<dbReference type="UCSC" id="uc002vjj.2">
    <property type="organism name" value="human"/>
</dbReference>
<dbReference type="AGR" id="HGNC:2395"/>
<dbReference type="CTD" id="1412"/>
<dbReference type="DisGeNET" id="1412"/>
<dbReference type="GeneCards" id="CRYBA2"/>
<dbReference type="HGNC" id="HGNC:2395">
    <property type="gene designation" value="CRYBA2"/>
</dbReference>
<dbReference type="HPA" id="ENSG00000163499">
    <property type="expression patterns" value="Tissue enhanced (pancreas, pituitary gland)"/>
</dbReference>
<dbReference type="MalaCards" id="CRYBA2"/>
<dbReference type="MIM" id="115900">
    <property type="type" value="phenotype"/>
</dbReference>
<dbReference type="MIM" id="600836">
    <property type="type" value="gene"/>
</dbReference>
<dbReference type="neXtProt" id="NX_P53672"/>
<dbReference type="OpenTargets" id="ENSG00000163499"/>
<dbReference type="Orphanet" id="98988">
    <property type="disease" value="Early-onset anterior polar cataract"/>
</dbReference>
<dbReference type="Orphanet" id="98991">
    <property type="disease" value="Early-onset nuclear cataract"/>
</dbReference>
<dbReference type="PharmGKB" id="PA26909"/>
<dbReference type="VEuPathDB" id="HostDB:ENSG00000163499"/>
<dbReference type="eggNOG" id="ENOG502QVIR">
    <property type="taxonomic scope" value="Eukaryota"/>
</dbReference>
<dbReference type="GeneTree" id="ENSGT00940000160306"/>
<dbReference type="HOGENOM" id="CLU_081883_0_0_1"/>
<dbReference type="InParanoid" id="P53672"/>
<dbReference type="OMA" id="SDCANIA"/>
<dbReference type="OrthoDB" id="10067219at2759"/>
<dbReference type="PAN-GO" id="P53672">
    <property type="GO annotations" value="3 GO annotations based on evolutionary models"/>
</dbReference>
<dbReference type="PhylomeDB" id="P53672"/>
<dbReference type="TreeFam" id="TF331401"/>
<dbReference type="PathwayCommons" id="P53672"/>
<dbReference type="SignaLink" id="P53672"/>
<dbReference type="BioGRID-ORCS" id="1412">
    <property type="hits" value="16 hits in 1141 CRISPR screens"/>
</dbReference>
<dbReference type="ChiTaRS" id="CRYBA2">
    <property type="organism name" value="human"/>
</dbReference>
<dbReference type="GenomeRNAi" id="1412"/>
<dbReference type="Pharos" id="P53672">
    <property type="development level" value="Tdark"/>
</dbReference>
<dbReference type="PRO" id="PR:P53672"/>
<dbReference type="Proteomes" id="UP000005640">
    <property type="component" value="Chromosome 2"/>
</dbReference>
<dbReference type="RNAct" id="P53672">
    <property type="molecule type" value="protein"/>
</dbReference>
<dbReference type="Bgee" id="ENSG00000163499">
    <property type="expression patterns" value="Expressed in islet of Langerhans and 93 other cell types or tissues"/>
</dbReference>
<dbReference type="ExpressionAtlas" id="P53672">
    <property type="expression patterns" value="baseline and differential"/>
</dbReference>
<dbReference type="GO" id="GO:0042802">
    <property type="term" value="F:identical protein binding"/>
    <property type="evidence" value="ECO:0007669"/>
    <property type="project" value="Ensembl"/>
</dbReference>
<dbReference type="GO" id="GO:0005212">
    <property type="term" value="F:structural constituent of eye lens"/>
    <property type="evidence" value="ECO:0000318"/>
    <property type="project" value="GO_Central"/>
</dbReference>
<dbReference type="GO" id="GO:0002088">
    <property type="term" value="P:lens development in camera-type eye"/>
    <property type="evidence" value="ECO:0000318"/>
    <property type="project" value="GO_Central"/>
</dbReference>
<dbReference type="GO" id="GO:0007601">
    <property type="term" value="P:visual perception"/>
    <property type="evidence" value="ECO:0000318"/>
    <property type="project" value="GO_Central"/>
</dbReference>
<dbReference type="FunFam" id="2.60.20.10:FF:000012">
    <property type="entry name" value="Beta-crystallin A2"/>
    <property type="match status" value="1"/>
</dbReference>
<dbReference type="FunFam" id="2.60.20.10:FF:000004">
    <property type="entry name" value="Crystallin beta A4"/>
    <property type="match status" value="1"/>
</dbReference>
<dbReference type="Gene3D" id="2.60.20.10">
    <property type="entry name" value="Crystallins"/>
    <property type="match status" value="2"/>
</dbReference>
<dbReference type="InterPro" id="IPR050252">
    <property type="entry name" value="Beta/Gamma-Crystallin"/>
</dbReference>
<dbReference type="InterPro" id="IPR001064">
    <property type="entry name" value="Beta/gamma_crystallin"/>
</dbReference>
<dbReference type="InterPro" id="IPR011024">
    <property type="entry name" value="G_crystallin-like"/>
</dbReference>
<dbReference type="PANTHER" id="PTHR11818:SF7">
    <property type="entry name" value="BETA-CRYSTALLIN A2"/>
    <property type="match status" value="1"/>
</dbReference>
<dbReference type="PANTHER" id="PTHR11818">
    <property type="entry name" value="BETA/GAMMA CRYSTALLIN"/>
    <property type="match status" value="1"/>
</dbReference>
<dbReference type="Pfam" id="PF00030">
    <property type="entry name" value="Crystall"/>
    <property type="match status" value="2"/>
</dbReference>
<dbReference type="PRINTS" id="PR01367">
    <property type="entry name" value="BGCRYSTALLIN"/>
</dbReference>
<dbReference type="SMART" id="SM00247">
    <property type="entry name" value="XTALbg"/>
    <property type="match status" value="2"/>
</dbReference>
<dbReference type="SUPFAM" id="SSF49695">
    <property type="entry name" value="gamma-Crystallin-like"/>
    <property type="match status" value="1"/>
</dbReference>
<dbReference type="PROSITE" id="PS50915">
    <property type="entry name" value="CRYSTALLIN_BETA_GAMMA"/>
    <property type="match status" value="4"/>
</dbReference>
<feature type="chain" id="PRO_0000057539" description="Beta-crystallin A2">
    <location>
        <begin position="1"/>
        <end position="197"/>
    </location>
</feature>
<feature type="domain" description="Beta/gamma crystallin 'Greek key' 1" evidence="2">
    <location>
        <begin position="12"/>
        <end position="52"/>
    </location>
</feature>
<feature type="domain" description="Beta/gamma crystallin 'Greek key' 2" evidence="2">
    <location>
        <begin position="53"/>
        <end position="99"/>
    </location>
</feature>
<feature type="domain" description="Beta/gamma crystallin 'Greek key' 3" evidence="2">
    <location>
        <begin position="106"/>
        <end position="147"/>
    </location>
</feature>
<feature type="domain" description="Beta/gamma crystallin 'Greek key' 4" evidence="2">
    <location>
        <begin position="148"/>
        <end position="196"/>
    </location>
</feature>
<feature type="region of interest" description="N-terminal arm">
    <location>
        <begin position="1"/>
        <end position="11"/>
    </location>
</feature>
<feature type="region of interest" description="Connecting peptide">
    <location>
        <begin position="100"/>
        <end position="105"/>
    </location>
</feature>
<feature type="sequence variant" id="VAR_070208" description="In dbSNP:rs141631259." evidence="4">
    <original>P</original>
    <variation>S</variation>
    <location>
        <position position="7"/>
    </location>
</feature>
<feature type="sequence variant" id="VAR_070029" description="In CTRCT42." evidence="3">
    <original>V</original>
    <variation>M</variation>
    <location>
        <position position="50"/>
    </location>
</feature>
<feature type="sequence conflict" description="In Ref. 6; CAA60147." evidence="5" ref="6">
    <original>Q</original>
    <variation>L</variation>
    <location>
        <position position="117"/>
    </location>
</feature>